<feature type="chain" id="PRO_0000353683" description="NAD(P)H-quinone oxidoreductase subunit L">
    <location>
        <begin position="1"/>
        <end position="74"/>
    </location>
</feature>
<feature type="transmembrane region" description="Helical" evidence="1">
    <location>
        <begin position="5"/>
        <end position="25"/>
    </location>
</feature>
<feature type="transmembrane region" description="Helical" evidence="1">
    <location>
        <begin position="43"/>
        <end position="63"/>
    </location>
</feature>
<sequence>MTVTLIIAALYLALAGAYLLVVPAALYLYLQKRWYVASSWERAFMYFLVFFFFPGLLLLAPLLNFRPRSRQIPA</sequence>
<gene>
    <name evidence="1" type="primary">ndhL</name>
    <name type="ordered locus">Synpcc7942_0413</name>
</gene>
<organism>
    <name type="scientific">Synechococcus elongatus (strain ATCC 33912 / PCC 7942 / FACHB-805)</name>
    <name type="common">Anacystis nidulans R2</name>
    <dbReference type="NCBI Taxonomy" id="1140"/>
    <lineage>
        <taxon>Bacteria</taxon>
        <taxon>Bacillati</taxon>
        <taxon>Cyanobacteriota</taxon>
        <taxon>Cyanophyceae</taxon>
        <taxon>Synechococcales</taxon>
        <taxon>Synechococcaceae</taxon>
        <taxon>Synechococcus</taxon>
    </lineage>
</organism>
<keyword id="KW-0472">Membrane</keyword>
<keyword id="KW-0520">NAD</keyword>
<keyword id="KW-0521">NADP</keyword>
<keyword id="KW-0618">Plastoquinone</keyword>
<keyword id="KW-0874">Quinone</keyword>
<keyword id="KW-1185">Reference proteome</keyword>
<keyword id="KW-0793">Thylakoid</keyword>
<keyword id="KW-1278">Translocase</keyword>
<keyword id="KW-0812">Transmembrane</keyword>
<keyword id="KW-1133">Transmembrane helix</keyword>
<keyword id="KW-0813">Transport</keyword>
<protein>
    <recommendedName>
        <fullName evidence="1">NAD(P)H-quinone oxidoreductase subunit L</fullName>
        <ecNumber evidence="1">7.1.1.-</ecNumber>
    </recommendedName>
    <alternativeName>
        <fullName evidence="1">NAD(P)H dehydrogenase I subunit L</fullName>
    </alternativeName>
    <alternativeName>
        <fullName>NDH-1 subunit L</fullName>
    </alternativeName>
    <alternativeName>
        <fullName>NDH-L</fullName>
    </alternativeName>
</protein>
<dbReference type="EC" id="7.1.1.-" evidence="1"/>
<dbReference type="EMBL" id="CP000100">
    <property type="protein sequence ID" value="ABB56445.1"/>
    <property type="status" value="ALT_INIT"/>
    <property type="molecule type" value="Genomic_DNA"/>
</dbReference>
<dbReference type="SMR" id="Q31R74"/>
<dbReference type="STRING" id="1140.Synpcc7942_0413"/>
<dbReference type="PaxDb" id="1140-Synpcc7942_0413"/>
<dbReference type="KEGG" id="syf:Synpcc7942_0413"/>
<dbReference type="eggNOG" id="ENOG5032ZM4">
    <property type="taxonomic scope" value="Bacteria"/>
</dbReference>
<dbReference type="HOGENOM" id="CLU_1854222_0_0_3"/>
<dbReference type="BioCyc" id="MetaCyc:SYNPCC7942_0413-MONOMER"/>
<dbReference type="BioCyc" id="SYNEL:SYNPCC7942_0413-MONOMER"/>
<dbReference type="Proteomes" id="UP000889800">
    <property type="component" value="Chromosome"/>
</dbReference>
<dbReference type="GO" id="GO:0031676">
    <property type="term" value="C:plasma membrane-derived thylakoid membrane"/>
    <property type="evidence" value="ECO:0007669"/>
    <property type="project" value="UniProtKB-SubCell"/>
</dbReference>
<dbReference type="GO" id="GO:0016655">
    <property type="term" value="F:oxidoreductase activity, acting on NAD(P)H, quinone or similar compound as acceptor"/>
    <property type="evidence" value="ECO:0007669"/>
    <property type="project" value="UniProtKB-UniRule"/>
</dbReference>
<dbReference type="GO" id="GO:0048038">
    <property type="term" value="F:quinone binding"/>
    <property type="evidence" value="ECO:0007669"/>
    <property type="project" value="UniProtKB-KW"/>
</dbReference>
<dbReference type="HAMAP" id="MF_01355">
    <property type="entry name" value="NDH1_NDH1L"/>
    <property type="match status" value="1"/>
</dbReference>
<dbReference type="InterPro" id="IPR019654">
    <property type="entry name" value="NADH-quinone_OxRdatse_su_L"/>
</dbReference>
<dbReference type="PANTHER" id="PTHR36727">
    <property type="entry name" value="NAD(P)H-QUINONE OXIDOREDUCTASE SUBUNIT L, CHLOROPLASTIC"/>
    <property type="match status" value="1"/>
</dbReference>
<dbReference type="PANTHER" id="PTHR36727:SF2">
    <property type="entry name" value="NAD(P)H-QUINONE OXIDOREDUCTASE SUBUNIT L, CHLOROPLASTIC"/>
    <property type="match status" value="1"/>
</dbReference>
<dbReference type="Pfam" id="PF10716">
    <property type="entry name" value="NdhL"/>
    <property type="match status" value="1"/>
</dbReference>
<accession>Q31R74</accession>
<evidence type="ECO:0000255" key="1">
    <source>
        <dbReference type="HAMAP-Rule" id="MF_01355"/>
    </source>
</evidence>
<evidence type="ECO:0000305" key="2"/>
<reference key="1">
    <citation type="submission" date="2005-08" db="EMBL/GenBank/DDBJ databases">
        <title>Complete sequence of chromosome 1 of Synechococcus elongatus PCC 7942.</title>
        <authorList>
            <consortium name="US DOE Joint Genome Institute"/>
            <person name="Copeland A."/>
            <person name="Lucas S."/>
            <person name="Lapidus A."/>
            <person name="Barry K."/>
            <person name="Detter J.C."/>
            <person name="Glavina T."/>
            <person name="Hammon N."/>
            <person name="Israni S."/>
            <person name="Pitluck S."/>
            <person name="Schmutz J."/>
            <person name="Larimer F."/>
            <person name="Land M."/>
            <person name="Kyrpides N."/>
            <person name="Lykidis A."/>
            <person name="Golden S."/>
            <person name="Richardson P."/>
        </authorList>
    </citation>
    <scope>NUCLEOTIDE SEQUENCE [LARGE SCALE GENOMIC DNA]</scope>
    <source>
        <strain>ATCC 33912 / PCC 7942 / FACHB-805</strain>
    </source>
</reference>
<name>NDHL_SYNE7</name>
<proteinExistence type="inferred from homology"/>
<comment type="function">
    <text evidence="1">NDH-1 shuttles electrons from an unknown electron donor, via FMN and iron-sulfur (Fe-S) centers, to quinones in the respiratory and/or the photosynthetic chain. The immediate electron acceptor for the enzyme in this species is believed to be plastoquinone. Couples the redox reaction to proton translocation, and thus conserves the redox energy in a proton gradient. Cyanobacterial NDH-1 also plays a role in inorganic carbon-concentration.</text>
</comment>
<comment type="catalytic activity">
    <reaction evidence="1">
        <text>a plastoquinone + NADH + (n+1) H(+)(in) = a plastoquinol + NAD(+) + n H(+)(out)</text>
        <dbReference type="Rhea" id="RHEA:42608"/>
        <dbReference type="Rhea" id="RHEA-COMP:9561"/>
        <dbReference type="Rhea" id="RHEA-COMP:9562"/>
        <dbReference type="ChEBI" id="CHEBI:15378"/>
        <dbReference type="ChEBI" id="CHEBI:17757"/>
        <dbReference type="ChEBI" id="CHEBI:57540"/>
        <dbReference type="ChEBI" id="CHEBI:57945"/>
        <dbReference type="ChEBI" id="CHEBI:62192"/>
    </reaction>
</comment>
<comment type="catalytic activity">
    <reaction evidence="1">
        <text>a plastoquinone + NADPH + (n+1) H(+)(in) = a plastoquinol + NADP(+) + n H(+)(out)</text>
        <dbReference type="Rhea" id="RHEA:42612"/>
        <dbReference type="Rhea" id="RHEA-COMP:9561"/>
        <dbReference type="Rhea" id="RHEA-COMP:9562"/>
        <dbReference type="ChEBI" id="CHEBI:15378"/>
        <dbReference type="ChEBI" id="CHEBI:17757"/>
        <dbReference type="ChEBI" id="CHEBI:57783"/>
        <dbReference type="ChEBI" id="CHEBI:58349"/>
        <dbReference type="ChEBI" id="CHEBI:62192"/>
    </reaction>
</comment>
<comment type="subunit">
    <text evidence="1">NDH-1 can be composed of about 15 different subunits; different subcomplexes with different compositions have been identified which probably have different functions.</text>
</comment>
<comment type="subcellular location">
    <subcellularLocation>
        <location evidence="1">Cellular thylakoid membrane</location>
        <topology evidence="1">Multi-pass membrane protein</topology>
    </subcellularLocation>
</comment>
<comment type="similarity">
    <text evidence="1">Belongs to the complex I NdhL subunit family.</text>
</comment>
<comment type="sequence caution" evidence="2">
    <conflict type="erroneous initiation">
        <sequence resource="EMBL-CDS" id="ABB56445"/>
    </conflict>
</comment>